<accession>Q71ZS1</accession>
<feature type="chain" id="PRO_0000163779" description="Ribonuclease Y">
    <location>
        <begin position="1"/>
        <end position="520"/>
    </location>
</feature>
<feature type="transmembrane region" description="Helical" evidence="1">
    <location>
        <begin position="5"/>
        <end position="25"/>
    </location>
</feature>
<feature type="domain" description="KH" evidence="1">
    <location>
        <begin position="210"/>
        <end position="273"/>
    </location>
</feature>
<feature type="domain" description="HD" evidence="2">
    <location>
        <begin position="336"/>
        <end position="429"/>
    </location>
</feature>
<feature type="region of interest" description="Disordered" evidence="3">
    <location>
        <begin position="76"/>
        <end position="127"/>
    </location>
</feature>
<reference key="1">
    <citation type="journal article" date="2004" name="Nucleic Acids Res.">
        <title>Whole genome comparisons of serotype 4b and 1/2a strains of the food-borne pathogen Listeria monocytogenes reveal new insights into the core genome components of this species.</title>
        <authorList>
            <person name="Nelson K.E."/>
            <person name="Fouts D.E."/>
            <person name="Mongodin E.F."/>
            <person name="Ravel J."/>
            <person name="DeBoy R.T."/>
            <person name="Kolonay J.F."/>
            <person name="Rasko D.A."/>
            <person name="Angiuoli S.V."/>
            <person name="Gill S.R."/>
            <person name="Paulsen I.T."/>
            <person name="Peterson J.D."/>
            <person name="White O."/>
            <person name="Nelson W.C."/>
            <person name="Nierman W.C."/>
            <person name="Beanan M.J."/>
            <person name="Brinkac L.M."/>
            <person name="Daugherty S.C."/>
            <person name="Dodson R.J."/>
            <person name="Durkin A.S."/>
            <person name="Madupu R."/>
            <person name="Haft D.H."/>
            <person name="Selengut J."/>
            <person name="Van Aken S.E."/>
            <person name="Khouri H.M."/>
            <person name="Fedorova N."/>
            <person name="Forberger H.A."/>
            <person name="Tran B."/>
            <person name="Kathariou S."/>
            <person name="Wonderling L.D."/>
            <person name="Uhlich G.A."/>
            <person name="Bayles D.O."/>
            <person name="Luchansky J.B."/>
            <person name="Fraser C.M."/>
        </authorList>
    </citation>
    <scope>NUCLEOTIDE SEQUENCE [LARGE SCALE GENOMIC DNA]</scope>
    <source>
        <strain>F2365</strain>
    </source>
</reference>
<organism>
    <name type="scientific">Listeria monocytogenes serotype 4b (strain F2365)</name>
    <dbReference type="NCBI Taxonomy" id="265669"/>
    <lineage>
        <taxon>Bacteria</taxon>
        <taxon>Bacillati</taxon>
        <taxon>Bacillota</taxon>
        <taxon>Bacilli</taxon>
        <taxon>Bacillales</taxon>
        <taxon>Listeriaceae</taxon>
        <taxon>Listeria</taxon>
    </lineage>
</organism>
<name>RNY_LISMF</name>
<proteinExistence type="inferred from homology"/>
<evidence type="ECO:0000255" key="1">
    <source>
        <dbReference type="HAMAP-Rule" id="MF_00335"/>
    </source>
</evidence>
<evidence type="ECO:0000255" key="2">
    <source>
        <dbReference type="PROSITE-ProRule" id="PRU01175"/>
    </source>
</evidence>
<evidence type="ECO:0000256" key="3">
    <source>
        <dbReference type="SAM" id="MobiDB-lite"/>
    </source>
</evidence>
<sequence>MTIAITIISSLLFLIVGLVVGSLIFKSSTEKKLAAARGTAELIVEDAKKEAETTKKEALLEAKEENHRLRTEIENELRGRRTETQKAENRLLQREENLDRKDTSLSKREATLERKEESISKRQQQIEEKESKLAEMIQAEQTELERISALSKEEAKSIILNQVEEELTHDTAIMVKESENRAKEESDKKAKNILSLAIQRCAADHVAETTVSVVTLPNDEMKGRIIGREGRNIRTLETLTGIDLIIDDTPEAVILSGFDPIRREIARIALEKLVQDGRIHPARIEEMVDKARKEVDEHIREVGEQATFEVGIHSIHPDLIKILGRLRYRTSYGQNVLNHSLEVSKLAGILAGELGEDVTLAKRAGLLHDIGKAIDHEIEGSHVEIGVELATKYKENDVVINSIASHHGDTEATSVIAVLVAAADALSAARPGARSETLENYIRRLEKLEEISESYDGVEKSYAIQAGREVRIIVEPDTIDDLSSYRLARDIRKRIEEELDYPGHIKVTVIRETRAVEYAK</sequence>
<comment type="function">
    <text evidence="1">Endoribonuclease that initiates mRNA decay.</text>
</comment>
<comment type="subcellular location">
    <subcellularLocation>
        <location evidence="1">Cell membrane</location>
        <topology evidence="1">Single-pass membrane protein</topology>
    </subcellularLocation>
</comment>
<comment type="similarity">
    <text evidence="1">Belongs to the RNase Y family.</text>
</comment>
<gene>
    <name evidence="1" type="primary">rny</name>
    <name type="ordered locus">LMOf2365_1418</name>
</gene>
<dbReference type="EC" id="3.1.-.-" evidence="1"/>
<dbReference type="EMBL" id="AE017262">
    <property type="protein sequence ID" value="AAT04193.1"/>
    <property type="molecule type" value="Genomic_DNA"/>
</dbReference>
<dbReference type="RefSeq" id="WP_003721904.1">
    <property type="nucleotide sequence ID" value="NC_002973.6"/>
</dbReference>
<dbReference type="SMR" id="Q71ZS1"/>
<dbReference type="GeneID" id="93239276"/>
<dbReference type="KEGG" id="lmf:LMOf2365_1418"/>
<dbReference type="HOGENOM" id="CLU_028328_1_0_9"/>
<dbReference type="GO" id="GO:0005886">
    <property type="term" value="C:plasma membrane"/>
    <property type="evidence" value="ECO:0007669"/>
    <property type="project" value="UniProtKB-SubCell"/>
</dbReference>
<dbReference type="GO" id="GO:0003723">
    <property type="term" value="F:RNA binding"/>
    <property type="evidence" value="ECO:0007669"/>
    <property type="project" value="UniProtKB-UniRule"/>
</dbReference>
<dbReference type="GO" id="GO:0004521">
    <property type="term" value="F:RNA endonuclease activity"/>
    <property type="evidence" value="ECO:0007669"/>
    <property type="project" value="UniProtKB-UniRule"/>
</dbReference>
<dbReference type="GO" id="GO:0006402">
    <property type="term" value="P:mRNA catabolic process"/>
    <property type="evidence" value="ECO:0007669"/>
    <property type="project" value="UniProtKB-UniRule"/>
</dbReference>
<dbReference type="CDD" id="cd00077">
    <property type="entry name" value="HDc"/>
    <property type="match status" value="1"/>
</dbReference>
<dbReference type="CDD" id="cd22431">
    <property type="entry name" value="KH-I_RNaseY"/>
    <property type="match status" value="1"/>
</dbReference>
<dbReference type="FunFam" id="1.10.3210.10:FF:000003">
    <property type="entry name" value="Ribonuclease Y"/>
    <property type="match status" value="1"/>
</dbReference>
<dbReference type="FunFam" id="3.30.1370.10:FF:000006">
    <property type="entry name" value="Ribonuclease Y"/>
    <property type="match status" value="1"/>
</dbReference>
<dbReference type="Gene3D" id="1.10.3210.10">
    <property type="entry name" value="Hypothetical protein af1432"/>
    <property type="match status" value="1"/>
</dbReference>
<dbReference type="Gene3D" id="3.30.1370.10">
    <property type="entry name" value="K Homology domain, type 1"/>
    <property type="match status" value="1"/>
</dbReference>
<dbReference type="HAMAP" id="MF_00335">
    <property type="entry name" value="RNase_Y"/>
    <property type="match status" value="1"/>
</dbReference>
<dbReference type="InterPro" id="IPR003607">
    <property type="entry name" value="HD/PDEase_dom"/>
</dbReference>
<dbReference type="InterPro" id="IPR006674">
    <property type="entry name" value="HD_domain"/>
</dbReference>
<dbReference type="InterPro" id="IPR006675">
    <property type="entry name" value="HDIG_dom"/>
</dbReference>
<dbReference type="InterPro" id="IPR004087">
    <property type="entry name" value="KH_dom"/>
</dbReference>
<dbReference type="InterPro" id="IPR004088">
    <property type="entry name" value="KH_dom_type_1"/>
</dbReference>
<dbReference type="InterPro" id="IPR036612">
    <property type="entry name" value="KH_dom_type_1_sf"/>
</dbReference>
<dbReference type="InterPro" id="IPR017705">
    <property type="entry name" value="Ribonuclease_Y"/>
</dbReference>
<dbReference type="InterPro" id="IPR022711">
    <property type="entry name" value="RNase_Y_N"/>
</dbReference>
<dbReference type="NCBIfam" id="TIGR00277">
    <property type="entry name" value="HDIG"/>
    <property type="match status" value="1"/>
</dbReference>
<dbReference type="NCBIfam" id="TIGR03319">
    <property type="entry name" value="RNase_Y"/>
    <property type="match status" value="1"/>
</dbReference>
<dbReference type="PANTHER" id="PTHR12826">
    <property type="entry name" value="RIBONUCLEASE Y"/>
    <property type="match status" value="1"/>
</dbReference>
<dbReference type="PANTHER" id="PTHR12826:SF15">
    <property type="entry name" value="RIBONUCLEASE Y"/>
    <property type="match status" value="1"/>
</dbReference>
<dbReference type="Pfam" id="PF01966">
    <property type="entry name" value="HD"/>
    <property type="match status" value="1"/>
</dbReference>
<dbReference type="Pfam" id="PF00013">
    <property type="entry name" value="KH_1"/>
    <property type="match status" value="1"/>
</dbReference>
<dbReference type="Pfam" id="PF12072">
    <property type="entry name" value="RNase_Y_N"/>
    <property type="match status" value="1"/>
</dbReference>
<dbReference type="SMART" id="SM00471">
    <property type="entry name" value="HDc"/>
    <property type="match status" value="1"/>
</dbReference>
<dbReference type="SMART" id="SM00322">
    <property type="entry name" value="KH"/>
    <property type="match status" value="1"/>
</dbReference>
<dbReference type="SUPFAM" id="SSF54791">
    <property type="entry name" value="Eukaryotic type KH-domain (KH-domain type I)"/>
    <property type="match status" value="1"/>
</dbReference>
<dbReference type="SUPFAM" id="SSF109604">
    <property type="entry name" value="HD-domain/PDEase-like"/>
    <property type="match status" value="1"/>
</dbReference>
<dbReference type="PROSITE" id="PS51831">
    <property type="entry name" value="HD"/>
    <property type="match status" value="1"/>
</dbReference>
<dbReference type="PROSITE" id="PS50084">
    <property type="entry name" value="KH_TYPE_1"/>
    <property type="match status" value="1"/>
</dbReference>
<keyword id="KW-1003">Cell membrane</keyword>
<keyword id="KW-0255">Endonuclease</keyword>
<keyword id="KW-0378">Hydrolase</keyword>
<keyword id="KW-0472">Membrane</keyword>
<keyword id="KW-0540">Nuclease</keyword>
<keyword id="KW-0694">RNA-binding</keyword>
<keyword id="KW-0812">Transmembrane</keyword>
<keyword id="KW-1133">Transmembrane helix</keyword>
<protein>
    <recommendedName>
        <fullName evidence="1">Ribonuclease Y</fullName>
        <shortName evidence="1">RNase Y</shortName>
        <ecNumber evidence="1">3.1.-.-</ecNumber>
    </recommendedName>
</protein>